<name>KRT_CEREL</name>
<reference evidence="3" key="1">
    <citation type="submission" date="2010-03" db="UniProtKB">
        <authorList>
            <person name="Hollemeyer K."/>
        </authorList>
    </citation>
    <scope>IDENTIFICATION BY MASS SPECTROMETRY</scope>
    <source>
        <tissue>Hair</tissue>
    </source>
</reference>
<proteinExistence type="evidence at protein level"/>
<evidence type="ECO:0000255" key="1"/>
<evidence type="ECO:0000255" key="2">
    <source>
        <dbReference type="PROSITE-ProRule" id="PRU01188"/>
    </source>
</evidence>
<evidence type="ECO:0000305" key="3"/>
<organism>
    <name type="scientific">Cervus elaphus</name>
    <name type="common">Red deer</name>
    <dbReference type="NCBI Taxonomy" id="9860"/>
    <lineage>
        <taxon>Eukaryota</taxon>
        <taxon>Metazoa</taxon>
        <taxon>Chordata</taxon>
        <taxon>Craniata</taxon>
        <taxon>Vertebrata</taxon>
        <taxon>Euteleostomi</taxon>
        <taxon>Mammalia</taxon>
        <taxon>Eutheria</taxon>
        <taxon>Laurasiatheria</taxon>
        <taxon>Artiodactyla</taxon>
        <taxon>Ruminantia</taxon>
        <taxon>Pecora</taxon>
        <taxon>Cervidae</taxon>
        <taxon>Cervinae</taxon>
        <taxon>Cervus</taxon>
    </lineage>
</organism>
<comment type="miscellaneous">
    <text evidence="3">There are two types of hair/microfibrillar keratin, I (acidic) and II (neutral to basic).</text>
</comment>
<comment type="similarity">
    <text evidence="2">Belongs to the intermediate filament family.</text>
</comment>
<protein>
    <recommendedName>
        <fullName>Keratin</fullName>
    </recommendedName>
</protein>
<keyword id="KW-0175">Coiled coil</keyword>
<keyword id="KW-0403">Intermediate filament</keyword>
<keyword id="KW-0416">Keratin</keyword>
<dbReference type="GO" id="GO:0005882">
    <property type="term" value="C:intermediate filament"/>
    <property type="evidence" value="ECO:0007669"/>
    <property type="project" value="UniProtKB-KW"/>
</dbReference>
<dbReference type="InterPro" id="IPR039008">
    <property type="entry name" value="IF_rod_dom"/>
</dbReference>
<dbReference type="PROSITE" id="PS51842">
    <property type="entry name" value="IF_ROD_2"/>
    <property type="match status" value="1"/>
</dbReference>
<feature type="chain" id="PRO_0000394451" description="Keratin">
    <location>
        <begin position="1" status="less than"/>
        <end position="23" status="greater than"/>
    </location>
</feature>
<feature type="domain" description="IF rod" evidence="2">
    <location>
        <begin position="1" status="less than"/>
        <end position="23" status="greater than"/>
    </location>
</feature>
<feature type="region of interest" description="Coil 2" evidence="1">
    <location>
        <begin position="1" status="less than"/>
        <end position="23" status="greater than"/>
    </location>
</feature>
<feature type="non-terminal residue">
    <location>
        <position position="1"/>
    </location>
</feature>
<feature type="non-terminal residue">
    <location>
        <position position="23"/>
    </location>
</feature>
<sequence length="23" mass="2504">YSSQLAQVQGLIGNVESQLAEIR</sequence>
<accession>P86498</accession>